<sequence>MEAPGLAQAAAAESDSRKVAEETPDGAPALCPSPEALSPEPPVYSLQDFDTLATVGTGTFGRVHLVKEKTAKHFFALKVMSIPDVIRLKQEQHVHNEKSVLKEVSHPFLIRLFWTWHDERFLYMLMEYVPGGELFSYLRNRGRFSSTTGLFYSAEIICAIEYLHSKEIVYRDLKPENILLDRDGHIKLTDFGFAKKLVDRTWTLCGTPEYLAPEVIQSKGHGRAVDWWALGILIFEMLSGFPPFFDDNPFGIYQKILAGKIDFPRHLDFHVKDLIKKLLVVDRTRRLGNMKNGANDVKHHRWFRSVDWEAVPQRKLKPPIVPKIAGDGDTSNFETYPENDWDTAAPVPQKDLEIFKNF</sequence>
<accession>P51817</accession>
<gene>
    <name type="primary">PRKX</name>
    <name type="synonym">PKX1</name>
</gene>
<proteinExistence type="evidence at protein level"/>
<name>PRKX_HUMAN</name>
<dbReference type="EC" id="2.7.11.1"/>
<dbReference type="EMBL" id="X85545">
    <property type="protein sequence ID" value="CAA59733.1"/>
    <property type="molecule type" value="mRNA"/>
</dbReference>
<dbReference type="EMBL" id="BC041073">
    <property type="protein sequence ID" value="AAH41073.1"/>
    <property type="molecule type" value="mRNA"/>
</dbReference>
<dbReference type="CCDS" id="CCDS14125.1"/>
<dbReference type="PIR" id="I38121">
    <property type="entry name" value="I38121"/>
</dbReference>
<dbReference type="RefSeq" id="NP_005035.1">
    <property type="nucleotide sequence ID" value="NM_005044.5"/>
</dbReference>
<dbReference type="SMR" id="P51817"/>
<dbReference type="BioGRID" id="111599">
    <property type="interactions" value="50"/>
</dbReference>
<dbReference type="FunCoup" id="P51817">
    <property type="interactions" value="2328"/>
</dbReference>
<dbReference type="IntAct" id="P51817">
    <property type="interactions" value="44"/>
</dbReference>
<dbReference type="STRING" id="9606.ENSP00000262848"/>
<dbReference type="BindingDB" id="P51817"/>
<dbReference type="ChEMBL" id="CHEMBL5818"/>
<dbReference type="DrugCentral" id="P51817"/>
<dbReference type="GuidetoPHARMACOLOGY" id="2175"/>
<dbReference type="iPTMnet" id="P51817"/>
<dbReference type="PhosphoSitePlus" id="P51817"/>
<dbReference type="BioMuta" id="PRKX"/>
<dbReference type="DMDM" id="1709648"/>
<dbReference type="CPTAC" id="CPTAC-2901"/>
<dbReference type="CPTAC" id="CPTAC-2902"/>
<dbReference type="jPOST" id="P51817"/>
<dbReference type="MassIVE" id="P51817"/>
<dbReference type="PaxDb" id="9606-ENSP00000262848"/>
<dbReference type="PeptideAtlas" id="P51817"/>
<dbReference type="ProteomicsDB" id="56426"/>
<dbReference type="Pumba" id="P51817"/>
<dbReference type="Antibodypedia" id="7924">
    <property type="antibodies" value="235 antibodies from 30 providers"/>
</dbReference>
<dbReference type="DNASU" id="5613"/>
<dbReference type="Ensembl" id="ENST00000262848.6">
    <property type="protein sequence ID" value="ENSP00000262848.5"/>
    <property type="gene ID" value="ENSG00000183943.6"/>
</dbReference>
<dbReference type="GeneID" id="5613"/>
<dbReference type="KEGG" id="hsa:5613"/>
<dbReference type="MANE-Select" id="ENST00000262848.6">
    <property type="protein sequence ID" value="ENSP00000262848.5"/>
    <property type="RefSeq nucleotide sequence ID" value="NM_005044.5"/>
    <property type="RefSeq protein sequence ID" value="NP_005035.1"/>
</dbReference>
<dbReference type="UCSC" id="uc010nde.4">
    <property type="organism name" value="human"/>
</dbReference>
<dbReference type="AGR" id="HGNC:9441"/>
<dbReference type="CTD" id="5613"/>
<dbReference type="DisGeNET" id="5613"/>
<dbReference type="GeneCards" id="PRKX"/>
<dbReference type="HGNC" id="HGNC:9441">
    <property type="gene designation" value="PRKX"/>
</dbReference>
<dbReference type="HPA" id="ENSG00000183943">
    <property type="expression patterns" value="Tissue enhanced (thyroid)"/>
</dbReference>
<dbReference type="MIM" id="300083">
    <property type="type" value="gene"/>
</dbReference>
<dbReference type="neXtProt" id="NX_P51817"/>
<dbReference type="OpenTargets" id="ENSG00000183943"/>
<dbReference type="PharmGKB" id="PA33786"/>
<dbReference type="VEuPathDB" id="HostDB:ENSG00000183943"/>
<dbReference type="eggNOG" id="KOG0616">
    <property type="taxonomic scope" value="Eukaryota"/>
</dbReference>
<dbReference type="GeneTree" id="ENSGT00940000159832"/>
<dbReference type="HOGENOM" id="CLU_000288_63_5_1"/>
<dbReference type="InParanoid" id="P51817"/>
<dbReference type="OMA" id="NSMARFY"/>
<dbReference type="OrthoDB" id="10252171at2759"/>
<dbReference type="PAN-GO" id="P51817">
    <property type="GO annotations" value="4 GO annotations based on evolutionary models"/>
</dbReference>
<dbReference type="PhylomeDB" id="P51817"/>
<dbReference type="TreeFam" id="TF313399"/>
<dbReference type="BRENDA" id="2.7.11.1">
    <property type="organism ID" value="2681"/>
</dbReference>
<dbReference type="PathwayCommons" id="P51817"/>
<dbReference type="Reactome" id="R-HSA-111931">
    <property type="pathway name" value="PKA-mediated phosphorylation of CREB"/>
</dbReference>
<dbReference type="Reactome" id="R-HSA-442720">
    <property type="pathway name" value="CREB1 phosphorylation through the activation of Adenylate Cyclase"/>
</dbReference>
<dbReference type="Reactome" id="R-HSA-9660821">
    <property type="pathway name" value="ADORA2B mediated anti-inflammatory cytokines production"/>
</dbReference>
<dbReference type="Reactome" id="R-HSA-9664323">
    <property type="pathway name" value="FCGR3A-mediated IL10 synthesis"/>
</dbReference>
<dbReference type="SABIO-RK" id="P51817"/>
<dbReference type="SignaLink" id="P51817"/>
<dbReference type="SIGNOR" id="P51817"/>
<dbReference type="BioGRID-ORCS" id="5613">
    <property type="hits" value="8 hits in 806 CRISPR screens"/>
</dbReference>
<dbReference type="ChiTaRS" id="PRKX">
    <property type="organism name" value="human"/>
</dbReference>
<dbReference type="GenomeRNAi" id="5613"/>
<dbReference type="Pharos" id="P51817">
    <property type="development level" value="Tchem"/>
</dbReference>
<dbReference type="PRO" id="PR:P51817"/>
<dbReference type="Proteomes" id="UP000005640">
    <property type="component" value="Chromosome X"/>
</dbReference>
<dbReference type="RNAct" id="P51817">
    <property type="molecule type" value="protein"/>
</dbReference>
<dbReference type="Bgee" id="ENSG00000183943">
    <property type="expression patterns" value="Expressed in ganglionic eminence and 155 other cell types or tissues"/>
</dbReference>
<dbReference type="ExpressionAtlas" id="P51817">
    <property type="expression patterns" value="baseline and differential"/>
</dbReference>
<dbReference type="GO" id="GO:0005952">
    <property type="term" value="C:cAMP-dependent protein kinase complex"/>
    <property type="evidence" value="ECO:0000318"/>
    <property type="project" value="GO_Central"/>
</dbReference>
<dbReference type="GO" id="GO:0005737">
    <property type="term" value="C:cytoplasm"/>
    <property type="evidence" value="ECO:0000314"/>
    <property type="project" value="UniProtKB"/>
</dbReference>
<dbReference type="GO" id="GO:0005829">
    <property type="term" value="C:cytosol"/>
    <property type="evidence" value="ECO:0000318"/>
    <property type="project" value="GO_Central"/>
</dbReference>
<dbReference type="GO" id="GO:0005654">
    <property type="term" value="C:nucleoplasm"/>
    <property type="evidence" value="ECO:0000314"/>
    <property type="project" value="HPA"/>
</dbReference>
<dbReference type="GO" id="GO:0005634">
    <property type="term" value="C:nucleus"/>
    <property type="evidence" value="ECO:0000314"/>
    <property type="project" value="UniProtKB"/>
</dbReference>
<dbReference type="GO" id="GO:0005524">
    <property type="term" value="F:ATP binding"/>
    <property type="evidence" value="ECO:0007669"/>
    <property type="project" value="UniProtKB-KW"/>
</dbReference>
<dbReference type="GO" id="GO:0004691">
    <property type="term" value="F:cAMP-dependent protein kinase activity"/>
    <property type="evidence" value="ECO:0000314"/>
    <property type="project" value="UniProtKB"/>
</dbReference>
<dbReference type="GO" id="GO:0106310">
    <property type="term" value="F:protein serine kinase activity"/>
    <property type="evidence" value="ECO:0007669"/>
    <property type="project" value="RHEA"/>
</dbReference>
<dbReference type="GO" id="GO:0001525">
    <property type="term" value="P:angiogenesis"/>
    <property type="evidence" value="ECO:0000315"/>
    <property type="project" value="UniProtKB"/>
</dbReference>
<dbReference type="GO" id="GO:0007155">
    <property type="term" value="P:cell adhesion"/>
    <property type="evidence" value="ECO:0000315"/>
    <property type="project" value="UniProtKB"/>
</dbReference>
<dbReference type="GO" id="GO:0031589">
    <property type="term" value="P:cell-substrate adhesion"/>
    <property type="evidence" value="ECO:0000315"/>
    <property type="project" value="UniProtKB"/>
</dbReference>
<dbReference type="GO" id="GO:0043542">
    <property type="term" value="P:endothelial cell migration"/>
    <property type="evidence" value="ECO:0000315"/>
    <property type="project" value="UniProtKB"/>
</dbReference>
<dbReference type="GO" id="GO:0001935">
    <property type="term" value="P:endothelial cell proliferation"/>
    <property type="evidence" value="ECO:0000315"/>
    <property type="project" value="UniProtKB"/>
</dbReference>
<dbReference type="GO" id="GO:0060562">
    <property type="term" value="P:epithelial tube morphogenesis"/>
    <property type="evidence" value="ECO:0000314"/>
    <property type="project" value="UniProtKB"/>
</dbReference>
<dbReference type="GO" id="GO:0060993">
    <property type="term" value="P:kidney morphogenesis"/>
    <property type="evidence" value="ECO:0000314"/>
    <property type="project" value="UniProtKB"/>
</dbReference>
<dbReference type="GO" id="GO:0030099">
    <property type="term" value="P:myeloid cell differentiation"/>
    <property type="evidence" value="ECO:0000314"/>
    <property type="project" value="UniProtKB"/>
</dbReference>
<dbReference type="GO" id="GO:0018105">
    <property type="term" value="P:peptidyl-serine phosphorylation"/>
    <property type="evidence" value="ECO:0000314"/>
    <property type="project" value="UniProtKB"/>
</dbReference>
<dbReference type="GO" id="GO:0046777">
    <property type="term" value="P:protein autophosphorylation"/>
    <property type="evidence" value="ECO:0000314"/>
    <property type="project" value="UniProtKB"/>
</dbReference>
<dbReference type="GO" id="GO:0030155">
    <property type="term" value="P:regulation of cell adhesion"/>
    <property type="evidence" value="ECO:0000314"/>
    <property type="project" value="UniProtKB"/>
</dbReference>
<dbReference type="GO" id="GO:0030334">
    <property type="term" value="P:regulation of cell migration"/>
    <property type="evidence" value="ECO:0000314"/>
    <property type="project" value="UniProtKB"/>
</dbReference>
<dbReference type="GO" id="GO:2000696">
    <property type="term" value="P:regulation of epithelial cell differentiation involved in kidney development"/>
    <property type="evidence" value="ECO:0000314"/>
    <property type="project" value="UniProtKB"/>
</dbReference>
<dbReference type="GO" id="GO:0007165">
    <property type="term" value="P:signal transduction"/>
    <property type="evidence" value="ECO:0000318"/>
    <property type="project" value="GO_Central"/>
</dbReference>
<dbReference type="CDD" id="cd05612">
    <property type="entry name" value="STKc_PRKX_like"/>
    <property type="match status" value="1"/>
</dbReference>
<dbReference type="FunFam" id="3.30.200.20:FF:000005">
    <property type="entry name" value="cAMP-dependent protein kinase catalytic subunit"/>
    <property type="match status" value="1"/>
</dbReference>
<dbReference type="FunFam" id="1.10.510.10:FF:000005">
    <property type="entry name" value="cAMP-dependent protein kinase catalytic subunit alpha"/>
    <property type="match status" value="1"/>
</dbReference>
<dbReference type="Gene3D" id="3.30.200.20">
    <property type="entry name" value="Phosphorylase Kinase, domain 1"/>
    <property type="match status" value="1"/>
</dbReference>
<dbReference type="Gene3D" id="1.10.510.10">
    <property type="entry name" value="Transferase(Phosphotransferase) domain 1"/>
    <property type="match status" value="1"/>
</dbReference>
<dbReference type="InterPro" id="IPR000961">
    <property type="entry name" value="AGC-kinase_C"/>
</dbReference>
<dbReference type="InterPro" id="IPR011009">
    <property type="entry name" value="Kinase-like_dom_sf"/>
</dbReference>
<dbReference type="InterPro" id="IPR000719">
    <property type="entry name" value="Prot_kinase_dom"/>
</dbReference>
<dbReference type="InterPro" id="IPR017441">
    <property type="entry name" value="Protein_kinase_ATP_BS"/>
</dbReference>
<dbReference type="InterPro" id="IPR008271">
    <property type="entry name" value="Ser/Thr_kinase_AS"/>
</dbReference>
<dbReference type="PANTHER" id="PTHR24353:SF133">
    <property type="entry name" value="CAMP-DEPENDENT PROTEIN KINASE CATALYTIC SUBUNIT PRKX-RELATED"/>
    <property type="match status" value="1"/>
</dbReference>
<dbReference type="PANTHER" id="PTHR24353">
    <property type="entry name" value="CYCLIC NUCLEOTIDE-DEPENDENT PROTEIN KINASE"/>
    <property type="match status" value="1"/>
</dbReference>
<dbReference type="Pfam" id="PF00069">
    <property type="entry name" value="Pkinase"/>
    <property type="match status" value="1"/>
</dbReference>
<dbReference type="SMART" id="SM00133">
    <property type="entry name" value="S_TK_X"/>
    <property type="match status" value="1"/>
</dbReference>
<dbReference type="SMART" id="SM00220">
    <property type="entry name" value="S_TKc"/>
    <property type="match status" value="1"/>
</dbReference>
<dbReference type="SUPFAM" id="SSF56112">
    <property type="entry name" value="Protein kinase-like (PK-like)"/>
    <property type="match status" value="1"/>
</dbReference>
<dbReference type="PROSITE" id="PS51285">
    <property type="entry name" value="AGC_KINASE_CTER"/>
    <property type="match status" value="1"/>
</dbReference>
<dbReference type="PROSITE" id="PS00107">
    <property type="entry name" value="PROTEIN_KINASE_ATP"/>
    <property type="match status" value="1"/>
</dbReference>
<dbReference type="PROSITE" id="PS50011">
    <property type="entry name" value="PROTEIN_KINASE_DOM"/>
    <property type="match status" value="1"/>
</dbReference>
<dbReference type="PROSITE" id="PS00108">
    <property type="entry name" value="PROTEIN_KINASE_ST"/>
    <property type="match status" value="1"/>
</dbReference>
<feature type="chain" id="PRO_0000086582" description="cAMP-dependent protein kinase catalytic subunit PRKX">
    <location>
        <begin position="1"/>
        <end position="358"/>
    </location>
</feature>
<feature type="domain" description="Protein kinase" evidence="2">
    <location>
        <begin position="49"/>
        <end position="303"/>
    </location>
</feature>
<feature type="domain" description="AGC-kinase C-terminal" evidence="3">
    <location>
        <begin position="304"/>
        <end position="358"/>
    </location>
</feature>
<feature type="region of interest" description="Disordered" evidence="5">
    <location>
        <begin position="1"/>
        <end position="34"/>
    </location>
</feature>
<feature type="active site" description="Proton acceptor" evidence="2 4">
    <location>
        <position position="172"/>
    </location>
</feature>
<feature type="binding site" evidence="2">
    <location>
        <begin position="55"/>
        <end position="63"/>
    </location>
    <ligand>
        <name>ATP</name>
        <dbReference type="ChEBI" id="CHEBI:30616"/>
    </ligand>
</feature>
<feature type="binding site" evidence="2">
    <location>
        <position position="78"/>
    </location>
    <ligand>
        <name>ATP</name>
        <dbReference type="ChEBI" id="CHEBI:30616"/>
    </ligand>
</feature>
<feature type="modified residue" description="N-acetylmethionine" evidence="18">
    <location>
        <position position="1"/>
    </location>
</feature>
<feature type="modified residue" description="Phosphothreonine" evidence="1">
    <location>
        <position position="203"/>
    </location>
</feature>
<feature type="sequence variant" id="VAR_061744" description="In dbSNP:rs3752362.">
    <original>V</original>
    <variation>A</variation>
    <location>
        <position position="43"/>
    </location>
</feature>
<feature type="mutagenesis site" description="Loss of function." evidence="7">
    <original>K</original>
    <variation>R</variation>
    <location>
        <position position="78"/>
    </location>
</feature>
<feature type="mutagenesis site" description="Constitutive kinase activity; when associated with R-202." evidence="9">
    <original>H</original>
    <variation>Q</variation>
    <location>
        <position position="93"/>
    </location>
</feature>
<feature type="mutagenesis site" description="Constitutive kinase activity; when associated with Q-93." evidence="9">
    <original>W</original>
    <variation>R</variation>
    <location>
        <position position="202"/>
    </location>
</feature>
<feature type="mutagenesis site" description="Increases the affinity for PRKAR2A and PRKAR2B." evidence="13">
    <original>R</original>
    <variation>L</variation>
    <location>
        <position position="283"/>
    </location>
</feature>
<evidence type="ECO:0000250" key="1">
    <source>
        <dbReference type="UniProtKB" id="Q922R0"/>
    </source>
</evidence>
<evidence type="ECO:0000255" key="2">
    <source>
        <dbReference type="PROSITE-ProRule" id="PRU00159"/>
    </source>
</evidence>
<evidence type="ECO:0000255" key="3">
    <source>
        <dbReference type="PROSITE-ProRule" id="PRU00618"/>
    </source>
</evidence>
<evidence type="ECO:0000255" key="4">
    <source>
        <dbReference type="PROSITE-ProRule" id="PRU10027"/>
    </source>
</evidence>
<evidence type="ECO:0000256" key="5">
    <source>
        <dbReference type="SAM" id="MobiDB-lite"/>
    </source>
</evidence>
<evidence type="ECO:0000269" key="6">
    <source>
    </source>
</evidence>
<evidence type="ECO:0000269" key="7">
    <source>
    </source>
</evidence>
<evidence type="ECO:0000269" key="8">
    <source>
    </source>
</evidence>
<evidence type="ECO:0000269" key="9">
    <source>
    </source>
</evidence>
<evidence type="ECO:0000269" key="10">
    <source>
    </source>
</evidence>
<evidence type="ECO:0000269" key="11">
    <source>
    </source>
</evidence>
<evidence type="ECO:0000269" key="12">
    <source>
    </source>
</evidence>
<evidence type="ECO:0000269" key="13">
    <source>
    </source>
</evidence>
<evidence type="ECO:0000269" key="14">
    <source>
    </source>
</evidence>
<evidence type="ECO:0000269" key="15">
    <source>
    </source>
</evidence>
<evidence type="ECO:0000269" key="16">
    <source>
    </source>
</evidence>
<evidence type="ECO:0000305" key="17"/>
<evidence type="ECO:0007744" key="18">
    <source>
    </source>
</evidence>
<reference key="1">
    <citation type="journal article" date="1995" name="Hum. Mol. Genet.">
        <title>The human protein kinase gene PKX1 on Xp22.3 displays Xp/Yp homology and is a site of chromosomal instability.</title>
        <authorList>
            <person name="Klink A."/>
            <person name="Schiebel K."/>
            <person name="Winkelmann M."/>
            <person name="Rao E."/>
            <person name="Horsthemke B."/>
            <person name="Luedecke H.-J."/>
            <person name="Claussen U."/>
            <person name="Scherer G."/>
            <person name="Rappold G."/>
        </authorList>
    </citation>
    <scope>NUCLEOTIDE SEQUENCE [MRNA]</scope>
    <scope>TISSUE SPECIFICITY</scope>
    <source>
        <tissue>Fetal brain</tissue>
    </source>
</reference>
<reference key="2">
    <citation type="journal article" date="2004" name="Genome Res.">
        <title>The status, quality, and expansion of the NIH full-length cDNA project: the Mammalian Gene Collection (MGC).</title>
        <authorList>
            <consortium name="The MGC Project Team"/>
        </authorList>
    </citation>
    <scope>NUCLEOTIDE SEQUENCE [LARGE SCALE MRNA]</scope>
    <source>
        <tissue>Blood</tissue>
    </source>
</reference>
<reference key="3">
    <citation type="journal article" date="1997" name="Hum. Mol. Genet.">
        <title>Abnormal XY interchange between a novel isolated protein kinase gene, PRKY, and its homologue, PRKX, accounts for one third of all (Y+)XX males and (Y-)XY females.</title>
        <authorList>
            <person name="Schiebel K."/>
            <person name="Winkelmann M."/>
            <person name="Mertz A."/>
            <person name="Xu X."/>
            <person name="Page D.C."/>
            <person name="Weil D."/>
            <person name="Petit C."/>
            <person name="Rappold G.A."/>
        </authorList>
    </citation>
    <scope>CHROMOSOMAL TRANSLOCATION WITH PRKY</scope>
</reference>
<reference key="4">
    <citation type="journal article" date="1998" name="Proc. Natl. Acad. Sci. U.S.A.">
        <title>A lineage-specific protein kinase crucial for myeloid maturation.</title>
        <authorList>
            <person name="Semizarov D."/>
            <person name="Glesne D."/>
            <person name="Laouar A."/>
            <person name="Schiebel K."/>
            <person name="Huberman E."/>
        </authorList>
    </citation>
    <scope>FUNCTION IN MYELOID CELL DIFFERENTIATION</scope>
    <scope>TISSUE SPECIFICITY</scope>
    <scope>INDUCTION BY PMA</scope>
</reference>
<reference key="5">
    <citation type="journal article" date="1999" name="J. Biol. Chem.">
        <title>PrKX is a novel catalytic subunit of the cAMP-dependent protein kinase regulated by the regulatory subunit type I.</title>
        <authorList>
            <person name="Zimmermann B."/>
            <person name="Chiorini J.A."/>
            <person name="Ma Y."/>
            <person name="Kotin R.M."/>
            <person name="Herberg F.W."/>
        </authorList>
    </citation>
    <scope>CATALYTIC ACTIVITY</scope>
    <scope>KINETIC PARAMETERS</scope>
    <scope>INTERACTION WITH PRKAR1A AND PKI</scope>
    <scope>ACTIVITY REGULATION BY PRKAR1A AND PKI</scope>
    <scope>SUBCELLULAR LOCATION</scope>
    <scope>AUTOPHOSPHORYLATION</scope>
</reference>
<reference key="6">
    <citation type="journal article" date="2002" name="Proc. Natl. Acad. Sci. U.S.A.">
        <title>PRKX, a phylogenetically and functionally distinct cAMP-dependent protein kinase, activates renal epithelial cell migration and morphogenesis.</title>
        <authorList>
            <person name="Li X."/>
            <person name="Li H.P."/>
            <person name="Amsler K."/>
            <person name="Hyink D."/>
            <person name="Wilson P.D."/>
            <person name="Burrow C.R."/>
        </authorList>
    </citation>
    <scope>FUNCTION IN CREB-DEPENDENT TRANSCRIPTION</scope>
    <scope>FUNCTION IN RENAL EPITHELIAL CELL MIGRATION AND TUBULOGENESIS</scope>
    <scope>CATALYTIC ACTIVITY</scope>
    <scope>KINETIC PARAMETERS</scope>
    <scope>ACTIVITY REGULATION</scope>
    <scope>SUBCELLULAR LOCATION</scope>
    <scope>MUTAGENESIS OF LYS-78</scope>
    <scope>DEVELOPMENTAL STAGE</scope>
</reference>
<reference key="7">
    <citation type="journal article" date="2005" name="J. Am. Soc. Nephrol.">
        <title>Protein kinase X activates ureteric bud branching morphogenesis in developing mouse metanephric kidney.</title>
        <authorList>
            <person name="Li X."/>
            <person name="Hyink D.P."/>
            <person name="Polgar K."/>
            <person name="Gusella G.L."/>
            <person name="Wilson P.D."/>
            <person name="Burrow C.R."/>
        </authorList>
    </citation>
    <scope>FUNCTION IN NEPHROGENESIS</scope>
    <scope>MUTAGENESIS OF HIS-93 AND TRP-202</scope>
    <scope>TISSUE SPECIFICITY</scope>
    <scope>DEVELOPMENTAL STAGE</scope>
</reference>
<reference key="8">
    <citation type="journal article" date="2005" name="J. Histochem. Cytochem.">
        <title>Profiles of PrKX expression in developmental mouse embryo and human tissues.</title>
        <authorList>
            <person name="Li W."/>
            <person name="Yu Z.X."/>
            <person name="Kotin R.M."/>
        </authorList>
    </citation>
    <scope>TISSUE SPECIFICITY</scope>
    <scope>DEVELOPMENTAL STAGE</scope>
</reference>
<reference key="9">
    <citation type="journal article" date="2006" name="Oncogene">
        <title>Smad6 is a protein kinase X phosphorylation substrate and is required for HL-60 cell differentiation.</title>
        <authorList>
            <person name="Glesne D."/>
            <person name="Huberman E."/>
        </authorList>
    </citation>
    <scope>FUNCTION IN MYELOID CELL DIFFERENTIATION</scope>
    <scope>FUNCTION IN PHOSPHORYLATION OF SMAD6</scope>
    <scope>AUTOPHOSPHORYLATION</scope>
    <scope>SUBCELLULAR LOCATION</scope>
    <scope>INTERACTION WITH GPKOW; PRKAR1A; SMAD6</scope>
    <scope>INDUCTION BY PMA</scope>
</reference>
<reference key="10">
    <citation type="journal article" date="2008" name="Biochim. Biophys. Acta">
        <title>Protein kinase X (PRKX) can rescue the effects of polycystic kidney disease-1 gene (PKD1) deficiency.</title>
        <authorList>
            <person name="Li X."/>
            <person name="Burrow C.R."/>
            <person name="Polgar K."/>
            <person name="Hyink D.P."/>
            <person name="Gusella G.L."/>
            <person name="Wilson P.D."/>
        </authorList>
    </citation>
    <scope>FUNCTION IN NEPHROGENESIS</scope>
    <scope>FUNCTION IN PHOSPHORYLATION OF PKD1</scope>
    <scope>INTERACTION WITH PKD1</scope>
</reference>
<reference key="11">
    <citation type="journal article" date="2009" name="Kidney Int.">
        <title>Protein kinase-X interacts with Pin-1 and Polycystin-1 during mouse kidney development.</title>
        <authorList>
            <person name="Li X."/>
            <person name="Hyink D.P."/>
            <person name="Radbill B."/>
            <person name="Sudol M."/>
            <person name="Zhang H."/>
            <person name="Zheleznova N.N."/>
            <person name="Wilson P.D."/>
        </authorList>
    </citation>
    <scope>FUNCTION IN NEPHROGENESIS</scope>
    <scope>INTERACTION WITH PIN1</scope>
</reference>
<reference key="12">
    <citation type="journal article" date="2010" name="J. Biol. Chem.">
        <title>Regulation of cAMP-dependent protein kinases: the human protein kinase X (PrKX) reveals the role of the catalytic subunit alphaH-alphaI loop.</title>
        <authorList>
            <person name="Diskar M."/>
            <person name="Zenn H.M."/>
            <person name="Kaupisch A."/>
            <person name="Kaufholz M."/>
            <person name="Brockmeyer S."/>
            <person name="Sohmen D."/>
            <person name="Berrera M."/>
            <person name="Zaccolo M."/>
            <person name="Boshart M."/>
            <person name="Herberg F.W."/>
            <person name="Prinz A."/>
        </authorList>
    </citation>
    <scope>ACTIVITY REGULATION</scope>
    <scope>INTERACTION WITH PRKAR1A AND PRKAR1B</scope>
    <scope>MUTAGENESIS OF ARG-283</scope>
</reference>
<reference key="13">
    <citation type="journal article" date="2011" name="Dev. Biol.">
        <title>PRKX critically regulates endothelial cell proliferation, migration, and vascular-like structure formation.</title>
        <authorList>
            <person name="Li X."/>
            <person name="Iomini C."/>
            <person name="Hyink D."/>
            <person name="Wilson P.D."/>
        </authorList>
    </citation>
    <scope>FUNCTION IN ANGIOGENESIS</scope>
</reference>
<reference key="14">
    <citation type="journal article" date="2012" name="Proc. Natl. Acad. Sci. U.S.A.">
        <title>N-terminal acetylome analyses and functional insights of the N-terminal acetyltransferase NatB.</title>
        <authorList>
            <person name="Van Damme P."/>
            <person name="Lasa M."/>
            <person name="Polevoda B."/>
            <person name="Gazquez C."/>
            <person name="Elosegui-Artola A."/>
            <person name="Kim D.S."/>
            <person name="De Juan-Pardo E."/>
            <person name="Demeyer K."/>
            <person name="Hole K."/>
            <person name="Larrea E."/>
            <person name="Timmerman E."/>
            <person name="Prieto J."/>
            <person name="Arnesen T."/>
            <person name="Sherman F."/>
            <person name="Gevaert K."/>
            <person name="Aldabe R."/>
        </authorList>
    </citation>
    <scope>ACETYLATION [LARGE SCALE ANALYSIS] AT MET-1</scope>
    <scope>IDENTIFICATION BY MASS SPECTROMETRY [LARGE SCALE ANALYSIS]</scope>
</reference>
<protein>
    <recommendedName>
        <fullName>cAMP-dependent protein kinase catalytic subunit PRKX</fullName>
        <shortName>PrKX</shortName>
        <shortName>Protein kinase X</shortName>
        <shortName>Protein kinase X-linked</shortName>
        <shortName>Serine/threonine-protein kinase PRKX</shortName>
        <ecNumber>2.7.11.1</ecNumber>
    </recommendedName>
    <alternativeName>
        <fullName>Protein kinase PKX1</fullName>
    </alternativeName>
</protein>
<organism>
    <name type="scientific">Homo sapiens</name>
    <name type="common">Human</name>
    <dbReference type="NCBI Taxonomy" id="9606"/>
    <lineage>
        <taxon>Eukaryota</taxon>
        <taxon>Metazoa</taxon>
        <taxon>Chordata</taxon>
        <taxon>Craniata</taxon>
        <taxon>Vertebrata</taxon>
        <taxon>Euteleostomi</taxon>
        <taxon>Mammalia</taxon>
        <taxon>Eutheria</taxon>
        <taxon>Euarchontoglires</taxon>
        <taxon>Primates</taxon>
        <taxon>Haplorrhini</taxon>
        <taxon>Catarrhini</taxon>
        <taxon>Hominidae</taxon>
        <taxon>Homo</taxon>
    </lineage>
</organism>
<keyword id="KW-0007">Acetylation</keyword>
<keyword id="KW-0037">Angiogenesis</keyword>
<keyword id="KW-0067">ATP-binding</keyword>
<keyword id="KW-0114">cAMP</keyword>
<keyword id="KW-0160">Chromosomal rearrangement</keyword>
<keyword id="KW-0963">Cytoplasm</keyword>
<keyword id="KW-0217">Developmental protein</keyword>
<keyword id="KW-0221">Differentiation</keyword>
<keyword id="KW-0418">Kinase</keyword>
<keyword id="KW-0547">Nucleotide-binding</keyword>
<keyword id="KW-0539">Nucleus</keyword>
<keyword id="KW-0597">Phosphoprotein</keyword>
<keyword id="KW-1267">Proteomics identification</keyword>
<keyword id="KW-1185">Reference proteome</keyword>
<keyword id="KW-0723">Serine/threonine-protein kinase</keyword>
<keyword id="KW-0808">Transferase</keyword>
<comment type="function">
    <text evidence="7 9 10 11 12 14 16">Serine/threonine protein kinase regulated by and mediating cAMP signaling in cells. Acts through phosphorylation of downstream targets that may include CREB, SMAD6 and PKD1 and has multiple functions in cellular differentiation and epithelial morphogenesis. Regulates myeloid cell differentiation through SMAD6 phosphorylation. Involved in nephrogenesis by stimulating renal epithelial cell migration and tubulogenesis. Also involved in angiogenesis through stimulation of endothelial cell proliferation, migration and vascular-like structure formation.</text>
</comment>
<comment type="catalytic activity">
    <reaction evidence="6 7">
        <text>L-seryl-[protein] + ATP = O-phospho-L-seryl-[protein] + ADP + H(+)</text>
        <dbReference type="Rhea" id="RHEA:17989"/>
        <dbReference type="Rhea" id="RHEA-COMP:9863"/>
        <dbReference type="Rhea" id="RHEA-COMP:11604"/>
        <dbReference type="ChEBI" id="CHEBI:15378"/>
        <dbReference type="ChEBI" id="CHEBI:29999"/>
        <dbReference type="ChEBI" id="CHEBI:30616"/>
        <dbReference type="ChEBI" id="CHEBI:83421"/>
        <dbReference type="ChEBI" id="CHEBI:456216"/>
        <dbReference type="EC" id="2.7.11.1"/>
    </reaction>
</comment>
<comment type="catalytic activity">
    <reaction evidence="6 7">
        <text>L-threonyl-[protein] + ATP = O-phospho-L-threonyl-[protein] + ADP + H(+)</text>
        <dbReference type="Rhea" id="RHEA:46608"/>
        <dbReference type="Rhea" id="RHEA-COMP:11060"/>
        <dbReference type="Rhea" id="RHEA-COMP:11605"/>
        <dbReference type="ChEBI" id="CHEBI:15378"/>
        <dbReference type="ChEBI" id="CHEBI:30013"/>
        <dbReference type="ChEBI" id="CHEBI:30616"/>
        <dbReference type="ChEBI" id="CHEBI:61977"/>
        <dbReference type="ChEBI" id="CHEBI:456216"/>
        <dbReference type="EC" id="2.7.11.1"/>
    </reaction>
</comment>
<comment type="activity regulation">
    <text evidence="6 7 13">Binding of cAMP to the PRKAR1A or PRKAR1B regulatory subunits induces dissociation of the holoenzyme heterotetramer. The released monomeric PRKX is then active and able to phosphorylate its substrates.</text>
</comment>
<comment type="biophysicochemical properties">
    <kinetics>
        <KM evidence="6 7">127 uM for ATP (in the presence of 10 mM magnesium chloride)</KM>
        <KM evidence="6 7">58 uM for kemptide (in the presence of 10 mM magnesium chloride)</KM>
        <KM evidence="6 7">6.7 uM for kemptide (in the presence of 1 uM Br-cAMP at 30 degrees Celsius)</KM>
    </kinetics>
</comment>
<comment type="subunit">
    <text evidence="6 10 11 12 13">Like other cAMP-dependent protein kinases, the inactive holoenzyme is probably composed of 2 PRKX catalytic subunits and a dimer of regulatory subunits. Interacts (cAMP-dependent) specifically with the regulatory subunits PRKAR1A and PRKAR1B. Compared to other cAMP-dependent serine/threonine protein kinases, does not interact with the 2 other PKA regulatory subunits PRKAR2A and PRKAR2B. Interacts with cAMP-dependent protein kinase inhibitor/PKI proteins; inhibits PRKX. Interacts with GPKOW. Interacts with SMAD6. Interacts with PKD1; involved in differentiation and controlled morphogenesis of the kidney. Interacts with PIN1 (via WW domain).</text>
</comment>
<comment type="interaction">
    <interactant intactId="EBI-4302903">
        <id>P51817</id>
    </interactant>
    <interactant intactId="EBI-746309">
        <id>Q92917</id>
        <label>GPKOW</label>
    </interactant>
    <organismsDiffer>false</organismsDiffer>
    <experiments>2</experiments>
</comment>
<comment type="interaction">
    <interactant intactId="EBI-4302903">
        <id>P51817</id>
    </interactant>
    <interactant intactId="EBI-352572">
        <id>P08238</id>
        <label>HSP90AB1</label>
    </interactant>
    <organismsDiffer>false</organismsDiffer>
    <experiments>3</experiments>
</comment>
<comment type="interaction">
    <interactant intactId="EBI-4302903">
        <id>P51817</id>
    </interactant>
    <interactant intactId="EBI-476431">
        <id>P10644</id>
        <label>PRKAR1A</label>
    </interactant>
    <organismsDiffer>false</organismsDiffer>
    <experiments>2</experiments>
</comment>
<comment type="interaction">
    <interactant intactId="EBI-4302903">
        <id>P51817</id>
    </interactant>
    <interactant intactId="EBI-976374">
        <id>O43541</id>
        <label>SMAD6</label>
    </interactant>
    <organismsDiffer>false</organismsDiffer>
    <experiments>5</experiments>
</comment>
<comment type="subcellular location">
    <subcellularLocation>
        <location>Cytoplasm</location>
    </subcellularLocation>
    <subcellularLocation>
        <location>Nucleus</location>
    </subcellularLocation>
    <text>cAMP induces nuclear translocation.</text>
</comment>
<comment type="tissue specificity">
    <text evidence="8 9 15 16">Widely expressed (at protein level). Specifically expressed in blood by macrophages and granulocytes according to PubMed:9860982.</text>
</comment>
<comment type="developmental stage">
    <text evidence="7 8 9">Expression is developmentally regulated being high and specific in a wide range of developing tissues including liver, kidney, brain and pancreas (at protein level).</text>
</comment>
<comment type="induction">
    <text evidence="10 16">Up-regulated by phorbol 12-myristate 13-acetate (PMA).</text>
</comment>
<comment type="PTM">
    <text>Phosphorylated; autophosphorylates in vitro.</text>
</comment>
<comment type="disease">
    <text>A chromosomal aberration involving PRKX is a cause of sex reversal disorder. Translocation t(X;Y)(p22;p11) with PRKY. Chromosomal translocations proximal to PRKY account for about 30% of the cases of sex reversal disorder in XX males and XY females.</text>
</comment>
<comment type="similarity">
    <text evidence="17">Belongs to the protein kinase superfamily. AGC Ser/Thr protein kinase family. cAMP subfamily.</text>
</comment>